<evidence type="ECO:0000255" key="1">
    <source>
        <dbReference type="HAMAP-Rule" id="MF_00095"/>
    </source>
</evidence>
<name>SFSA_CHRSD</name>
<protein>
    <recommendedName>
        <fullName evidence="1">Sugar fermentation stimulation protein homolog</fullName>
    </recommendedName>
</protein>
<keyword id="KW-1185">Reference proteome</keyword>
<gene>
    <name evidence="1" type="primary">sfsA</name>
    <name type="ordered locus">Csal_3059</name>
</gene>
<sequence>MQYTELVPGTLIRRYKRFLADVALASGDVVVAHCPNTGSMRAVDVPGCRVWLSPSRNPARKLAWTWELIELPMPDAPPALVSVHTGRANALVAQALQEARIPELAGYDTHKREVRVADARLDFRLSTAHAAAYVEVKQVTLREHDGHGYFPDSVSERGRRHLEALAARVAEGDRAVLLFCVAHTGIDAVAPAAHLDPAYAETLRRVAAQGVEVLAYGMSATWTHDGVPGDIALTRALPVSLERRLASATPLSD</sequence>
<dbReference type="EMBL" id="CP000285">
    <property type="protein sequence ID" value="ABE60403.1"/>
    <property type="molecule type" value="Genomic_DNA"/>
</dbReference>
<dbReference type="RefSeq" id="WP_011508349.1">
    <property type="nucleotide sequence ID" value="NC_007963.1"/>
</dbReference>
<dbReference type="SMR" id="Q1QT05"/>
<dbReference type="STRING" id="290398.Csal_3059"/>
<dbReference type="DNASU" id="4028055"/>
<dbReference type="GeneID" id="95335753"/>
<dbReference type="KEGG" id="csa:Csal_3059"/>
<dbReference type="eggNOG" id="COG1489">
    <property type="taxonomic scope" value="Bacteria"/>
</dbReference>
<dbReference type="HOGENOM" id="CLU_052299_2_0_6"/>
<dbReference type="OrthoDB" id="9802365at2"/>
<dbReference type="Proteomes" id="UP000000239">
    <property type="component" value="Chromosome"/>
</dbReference>
<dbReference type="GO" id="GO:0003677">
    <property type="term" value="F:DNA binding"/>
    <property type="evidence" value="ECO:0007669"/>
    <property type="project" value="InterPro"/>
</dbReference>
<dbReference type="CDD" id="cd22359">
    <property type="entry name" value="SfsA-like_bacterial"/>
    <property type="match status" value="1"/>
</dbReference>
<dbReference type="Gene3D" id="2.40.50.580">
    <property type="match status" value="1"/>
</dbReference>
<dbReference type="Gene3D" id="3.40.1350.60">
    <property type="match status" value="1"/>
</dbReference>
<dbReference type="HAMAP" id="MF_00095">
    <property type="entry name" value="SfsA"/>
    <property type="match status" value="1"/>
</dbReference>
<dbReference type="InterPro" id="IPR005224">
    <property type="entry name" value="SfsA"/>
</dbReference>
<dbReference type="InterPro" id="IPR040452">
    <property type="entry name" value="SfsA_C"/>
</dbReference>
<dbReference type="InterPro" id="IPR041465">
    <property type="entry name" value="SfsA_N"/>
</dbReference>
<dbReference type="NCBIfam" id="TIGR00230">
    <property type="entry name" value="sfsA"/>
    <property type="match status" value="1"/>
</dbReference>
<dbReference type="PANTHER" id="PTHR30545">
    <property type="entry name" value="SUGAR FERMENTATION STIMULATION PROTEIN A"/>
    <property type="match status" value="1"/>
</dbReference>
<dbReference type="PANTHER" id="PTHR30545:SF2">
    <property type="entry name" value="SUGAR FERMENTATION STIMULATION PROTEIN A"/>
    <property type="match status" value="1"/>
</dbReference>
<dbReference type="Pfam" id="PF03749">
    <property type="entry name" value="SfsA"/>
    <property type="match status" value="1"/>
</dbReference>
<dbReference type="Pfam" id="PF17746">
    <property type="entry name" value="SfsA_N"/>
    <property type="match status" value="1"/>
</dbReference>
<accession>Q1QT05</accession>
<feature type="chain" id="PRO_0000340134" description="Sugar fermentation stimulation protein homolog">
    <location>
        <begin position="1"/>
        <end position="253"/>
    </location>
</feature>
<comment type="similarity">
    <text evidence="1">Belongs to the SfsA family.</text>
</comment>
<organism>
    <name type="scientific">Chromohalobacter salexigens (strain ATCC BAA-138 / DSM 3043 / CIP 106854 / NCIMB 13768 / 1H11)</name>
    <dbReference type="NCBI Taxonomy" id="290398"/>
    <lineage>
        <taxon>Bacteria</taxon>
        <taxon>Pseudomonadati</taxon>
        <taxon>Pseudomonadota</taxon>
        <taxon>Gammaproteobacteria</taxon>
        <taxon>Oceanospirillales</taxon>
        <taxon>Halomonadaceae</taxon>
        <taxon>Chromohalobacter</taxon>
    </lineage>
</organism>
<proteinExistence type="inferred from homology"/>
<reference key="1">
    <citation type="journal article" date="2011" name="Stand. Genomic Sci.">
        <title>Complete genome sequence of the halophilic and highly halotolerant Chromohalobacter salexigens type strain (1H11(T)).</title>
        <authorList>
            <person name="Copeland A."/>
            <person name="O'Connor K."/>
            <person name="Lucas S."/>
            <person name="Lapidus A."/>
            <person name="Berry K.W."/>
            <person name="Detter J.C."/>
            <person name="Del Rio T.G."/>
            <person name="Hammon N."/>
            <person name="Dalin E."/>
            <person name="Tice H."/>
            <person name="Pitluck S."/>
            <person name="Bruce D."/>
            <person name="Goodwin L."/>
            <person name="Han C."/>
            <person name="Tapia R."/>
            <person name="Saunders E."/>
            <person name="Schmutz J."/>
            <person name="Brettin T."/>
            <person name="Larimer F."/>
            <person name="Land M."/>
            <person name="Hauser L."/>
            <person name="Vargas C."/>
            <person name="Nieto J.J."/>
            <person name="Kyrpides N.C."/>
            <person name="Ivanova N."/>
            <person name="Goker M."/>
            <person name="Klenk H.P."/>
            <person name="Csonka L.N."/>
            <person name="Woyke T."/>
        </authorList>
    </citation>
    <scope>NUCLEOTIDE SEQUENCE [LARGE SCALE GENOMIC DNA]</scope>
    <source>
        <strain>ATCC BAA-138 / DSM 3043 / CIP 106854 / NCIMB 13768 / 1H11</strain>
    </source>
</reference>